<feature type="chain" id="PRO_1000121588" description="Large ribosomal subunit protein bL28">
    <location>
        <begin position="1"/>
        <end position="92"/>
    </location>
</feature>
<comment type="similarity">
    <text evidence="1">Belongs to the bacterial ribosomal protein bL28 family.</text>
</comment>
<keyword id="KW-0687">Ribonucleoprotein</keyword>
<keyword id="KW-0689">Ribosomal protein</keyword>
<evidence type="ECO:0000255" key="1">
    <source>
        <dbReference type="HAMAP-Rule" id="MF_00373"/>
    </source>
</evidence>
<evidence type="ECO:0000305" key="2"/>
<sequence length="92" mass="10176">MARKCEITGKKTMFGNNVPRKGLAKKKGGAGQHIGVKTKRTFKVNLINKKFFIPNLGRSVSIKVSANALRSISKIGLDAFLKKNCKKIENFL</sequence>
<protein>
    <recommendedName>
        <fullName evidence="1">Large ribosomal subunit protein bL28</fullName>
    </recommendedName>
    <alternativeName>
        <fullName evidence="2">50S ribosomal protein L28</fullName>
    </alternativeName>
</protein>
<proteinExistence type="inferred from homology"/>
<dbReference type="EMBL" id="CP001205">
    <property type="protein sequence ID" value="ACK74568.1"/>
    <property type="molecule type" value="Genomic_DNA"/>
</dbReference>
<dbReference type="RefSeq" id="WP_002556947.1">
    <property type="nucleotide sequence ID" value="NC_011728.1"/>
</dbReference>
<dbReference type="SMR" id="B7J1S5"/>
<dbReference type="GeneID" id="56567779"/>
<dbReference type="KEGG" id="bbz:BbuZS7_0354"/>
<dbReference type="HOGENOM" id="CLU_064548_3_2_12"/>
<dbReference type="Proteomes" id="UP000006901">
    <property type="component" value="Chromosome"/>
</dbReference>
<dbReference type="GO" id="GO:1990904">
    <property type="term" value="C:ribonucleoprotein complex"/>
    <property type="evidence" value="ECO:0007669"/>
    <property type="project" value="UniProtKB-KW"/>
</dbReference>
<dbReference type="GO" id="GO:0005840">
    <property type="term" value="C:ribosome"/>
    <property type="evidence" value="ECO:0007669"/>
    <property type="project" value="UniProtKB-KW"/>
</dbReference>
<dbReference type="GO" id="GO:0003735">
    <property type="term" value="F:structural constituent of ribosome"/>
    <property type="evidence" value="ECO:0007669"/>
    <property type="project" value="InterPro"/>
</dbReference>
<dbReference type="GO" id="GO:0006412">
    <property type="term" value="P:translation"/>
    <property type="evidence" value="ECO:0007669"/>
    <property type="project" value="UniProtKB-UniRule"/>
</dbReference>
<dbReference type="Gene3D" id="2.30.170.40">
    <property type="entry name" value="Ribosomal protein L28/L24"/>
    <property type="match status" value="1"/>
</dbReference>
<dbReference type="HAMAP" id="MF_00373">
    <property type="entry name" value="Ribosomal_bL28"/>
    <property type="match status" value="1"/>
</dbReference>
<dbReference type="InterPro" id="IPR026569">
    <property type="entry name" value="Ribosomal_bL28"/>
</dbReference>
<dbReference type="InterPro" id="IPR034704">
    <property type="entry name" value="Ribosomal_bL28/bL31-like_sf"/>
</dbReference>
<dbReference type="InterPro" id="IPR001383">
    <property type="entry name" value="Ribosomal_bL28_bact-type"/>
</dbReference>
<dbReference type="InterPro" id="IPR037147">
    <property type="entry name" value="Ribosomal_bL28_sf"/>
</dbReference>
<dbReference type="NCBIfam" id="TIGR00009">
    <property type="entry name" value="L28"/>
    <property type="match status" value="1"/>
</dbReference>
<dbReference type="PANTHER" id="PTHR13528">
    <property type="entry name" value="39S RIBOSOMAL PROTEIN L28, MITOCHONDRIAL"/>
    <property type="match status" value="1"/>
</dbReference>
<dbReference type="PANTHER" id="PTHR13528:SF2">
    <property type="entry name" value="LARGE RIBOSOMAL SUBUNIT PROTEIN BL28M"/>
    <property type="match status" value="1"/>
</dbReference>
<dbReference type="Pfam" id="PF00830">
    <property type="entry name" value="Ribosomal_L28"/>
    <property type="match status" value="1"/>
</dbReference>
<dbReference type="SUPFAM" id="SSF143800">
    <property type="entry name" value="L28p-like"/>
    <property type="match status" value="1"/>
</dbReference>
<accession>B7J1S5</accession>
<organism>
    <name type="scientific">Borreliella burgdorferi (strain ZS7)</name>
    <name type="common">Borrelia burgdorferi</name>
    <dbReference type="NCBI Taxonomy" id="445985"/>
    <lineage>
        <taxon>Bacteria</taxon>
        <taxon>Pseudomonadati</taxon>
        <taxon>Spirochaetota</taxon>
        <taxon>Spirochaetia</taxon>
        <taxon>Spirochaetales</taxon>
        <taxon>Borreliaceae</taxon>
        <taxon>Borreliella</taxon>
    </lineage>
</organism>
<gene>
    <name evidence="1" type="primary">rpmB</name>
    <name type="ordered locus">BbuZS7_0354</name>
</gene>
<reference key="1">
    <citation type="journal article" date="2011" name="J. Bacteriol.">
        <title>Whole-genome sequences of thirteen isolates of Borrelia burgdorferi.</title>
        <authorList>
            <person name="Schutzer S.E."/>
            <person name="Fraser-Liggett C.M."/>
            <person name="Casjens S.R."/>
            <person name="Qiu W.G."/>
            <person name="Dunn J.J."/>
            <person name="Mongodin E.F."/>
            <person name="Luft B.J."/>
        </authorList>
    </citation>
    <scope>NUCLEOTIDE SEQUENCE [LARGE SCALE GENOMIC DNA]</scope>
    <source>
        <strain>ZS7</strain>
    </source>
</reference>
<name>RL28_BORBZ</name>